<proteinExistence type="inferred from homology"/>
<comment type="function">
    <text evidence="1">Catalyzes the ATP-dependent phosphorylation of L-homoserine to L-homoserine phosphate.</text>
</comment>
<comment type="catalytic activity">
    <reaction evidence="1">
        <text>L-homoserine + ATP = O-phospho-L-homoserine + ADP + H(+)</text>
        <dbReference type="Rhea" id="RHEA:13985"/>
        <dbReference type="ChEBI" id="CHEBI:15378"/>
        <dbReference type="ChEBI" id="CHEBI:30616"/>
        <dbReference type="ChEBI" id="CHEBI:57476"/>
        <dbReference type="ChEBI" id="CHEBI:57590"/>
        <dbReference type="ChEBI" id="CHEBI:456216"/>
        <dbReference type="EC" id="2.7.1.39"/>
    </reaction>
</comment>
<comment type="pathway">
    <text evidence="1">Amino-acid biosynthesis; L-threonine biosynthesis; L-threonine from L-aspartate: step 4/5.</text>
</comment>
<comment type="subcellular location">
    <subcellularLocation>
        <location evidence="1">Cytoplasm</location>
    </subcellularLocation>
</comment>
<comment type="similarity">
    <text evidence="1">Belongs to the GHMP kinase family. Homoserine kinase subfamily.</text>
</comment>
<keyword id="KW-0028">Amino-acid biosynthesis</keyword>
<keyword id="KW-0067">ATP-binding</keyword>
<keyword id="KW-0963">Cytoplasm</keyword>
<keyword id="KW-0418">Kinase</keyword>
<keyword id="KW-0547">Nucleotide-binding</keyword>
<keyword id="KW-0791">Threonine biosynthesis</keyword>
<keyword id="KW-0808">Transferase</keyword>
<feature type="chain" id="PRO_1000122454" description="Homoserine kinase">
    <location>
        <begin position="1"/>
        <end position="309"/>
    </location>
</feature>
<feature type="binding site" evidence="1">
    <location>
        <begin position="91"/>
        <end position="101"/>
    </location>
    <ligand>
        <name>ATP</name>
        <dbReference type="ChEBI" id="CHEBI:30616"/>
    </ligand>
</feature>
<protein>
    <recommendedName>
        <fullName evidence="1">Homoserine kinase</fullName>
        <shortName evidence="1">HK</shortName>
        <shortName evidence="1">HSK</shortName>
        <ecNumber evidence="1">2.7.1.39</ecNumber>
    </recommendedName>
</protein>
<dbReference type="EC" id="2.7.1.39" evidence="1"/>
<dbReference type="EMBL" id="CP001048">
    <property type="protein sequence ID" value="ACC87611.1"/>
    <property type="molecule type" value="Genomic_DNA"/>
</dbReference>
<dbReference type="RefSeq" id="WP_002209238.1">
    <property type="nucleotide sequence ID" value="NZ_CP009780.1"/>
</dbReference>
<dbReference type="SMR" id="B2K3L2"/>
<dbReference type="GeneID" id="96664104"/>
<dbReference type="KEGG" id="ypb:YPTS_0627"/>
<dbReference type="PATRIC" id="fig|502801.10.peg.4306"/>
<dbReference type="UniPathway" id="UPA00050">
    <property type="reaction ID" value="UER00064"/>
</dbReference>
<dbReference type="GO" id="GO:0005737">
    <property type="term" value="C:cytoplasm"/>
    <property type="evidence" value="ECO:0007669"/>
    <property type="project" value="UniProtKB-SubCell"/>
</dbReference>
<dbReference type="GO" id="GO:0005524">
    <property type="term" value="F:ATP binding"/>
    <property type="evidence" value="ECO:0007669"/>
    <property type="project" value="UniProtKB-UniRule"/>
</dbReference>
<dbReference type="GO" id="GO:0004413">
    <property type="term" value="F:homoserine kinase activity"/>
    <property type="evidence" value="ECO:0007669"/>
    <property type="project" value="UniProtKB-UniRule"/>
</dbReference>
<dbReference type="GO" id="GO:0009088">
    <property type="term" value="P:threonine biosynthetic process"/>
    <property type="evidence" value="ECO:0007669"/>
    <property type="project" value="UniProtKB-UniRule"/>
</dbReference>
<dbReference type="FunFam" id="3.30.230.10:FF:000020">
    <property type="entry name" value="Homoserine kinase"/>
    <property type="match status" value="1"/>
</dbReference>
<dbReference type="FunFam" id="3.30.70.890:FF:000002">
    <property type="entry name" value="Homoserine kinase"/>
    <property type="match status" value="1"/>
</dbReference>
<dbReference type="Gene3D" id="3.30.230.10">
    <property type="match status" value="1"/>
</dbReference>
<dbReference type="Gene3D" id="3.30.70.890">
    <property type="entry name" value="GHMP kinase, C-terminal domain"/>
    <property type="match status" value="1"/>
</dbReference>
<dbReference type="HAMAP" id="MF_00384">
    <property type="entry name" value="Homoser_kinase"/>
    <property type="match status" value="1"/>
</dbReference>
<dbReference type="InterPro" id="IPR013750">
    <property type="entry name" value="GHMP_kinase_C_dom"/>
</dbReference>
<dbReference type="InterPro" id="IPR036554">
    <property type="entry name" value="GHMP_kinase_C_sf"/>
</dbReference>
<dbReference type="InterPro" id="IPR006204">
    <property type="entry name" value="GHMP_kinase_N_dom"/>
</dbReference>
<dbReference type="InterPro" id="IPR006203">
    <property type="entry name" value="GHMP_knse_ATP-bd_CS"/>
</dbReference>
<dbReference type="InterPro" id="IPR000870">
    <property type="entry name" value="Homoserine_kinase"/>
</dbReference>
<dbReference type="InterPro" id="IPR020568">
    <property type="entry name" value="Ribosomal_Su5_D2-typ_SF"/>
</dbReference>
<dbReference type="InterPro" id="IPR014721">
    <property type="entry name" value="Ribsml_uS5_D2-typ_fold_subgr"/>
</dbReference>
<dbReference type="NCBIfam" id="NF002288">
    <property type="entry name" value="PRK01212.1-4"/>
    <property type="match status" value="1"/>
</dbReference>
<dbReference type="NCBIfam" id="TIGR00191">
    <property type="entry name" value="thrB"/>
    <property type="match status" value="1"/>
</dbReference>
<dbReference type="PANTHER" id="PTHR20861:SF1">
    <property type="entry name" value="HOMOSERINE KINASE"/>
    <property type="match status" value="1"/>
</dbReference>
<dbReference type="PANTHER" id="PTHR20861">
    <property type="entry name" value="HOMOSERINE/4-DIPHOSPHOCYTIDYL-2-C-METHYL-D-ERYTHRITOL KINASE"/>
    <property type="match status" value="1"/>
</dbReference>
<dbReference type="Pfam" id="PF08544">
    <property type="entry name" value="GHMP_kinases_C"/>
    <property type="match status" value="1"/>
</dbReference>
<dbReference type="Pfam" id="PF00288">
    <property type="entry name" value="GHMP_kinases_N"/>
    <property type="match status" value="1"/>
</dbReference>
<dbReference type="PIRSF" id="PIRSF000676">
    <property type="entry name" value="Homoser_kin"/>
    <property type="match status" value="1"/>
</dbReference>
<dbReference type="PRINTS" id="PR00958">
    <property type="entry name" value="HOMSERKINASE"/>
</dbReference>
<dbReference type="SUPFAM" id="SSF55060">
    <property type="entry name" value="GHMP Kinase, C-terminal domain"/>
    <property type="match status" value="1"/>
</dbReference>
<dbReference type="SUPFAM" id="SSF54211">
    <property type="entry name" value="Ribosomal protein S5 domain 2-like"/>
    <property type="match status" value="1"/>
</dbReference>
<dbReference type="PROSITE" id="PS00627">
    <property type="entry name" value="GHMP_KINASES_ATP"/>
    <property type="match status" value="1"/>
</dbReference>
<reference key="1">
    <citation type="submission" date="2008-04" db="EMBL/GenBank/DDBJ databases">
        <title>Complete sequence of Yersinia pseudotuberculosis PB1/+.</title>
        <authorList>
            <person name="Copeland A."/>
            <person name="Lucas S."/>
            <person name="Lapidus A."/>
            <person name="Glavina del Rio T."/>
            <person name="Dalin E."/>
            <person name="Tice H."/>
            <person name="Bruce D."/>
            <person name="Goodwin L."/>
            <person name="Pitluck S."/>
            <person name="Munk A.C."/>
            <person name="Brettin T."/>
            <person name="Detter J.C."/>
            <person name="Han C."/>
            <person name="Tapia R."/>
            <person name="Schmutz J."/>
            <person name="Larimer F."/>
            <person name="Land M."/>
            <person name="Hauser L."/>
            <person name="Challacombe J.F."/>
            <person name="Green L."/>
            <person name="Lindler L.E."/>
            <person name="Nikolich M.P."/>
            <person name="Richardson P."/>
        </authorList>
    </citation>
    <scope>NUCLEOTIDE SEQUENCE [LARGE SCALE GENOMIC DNA]</scope>
    <source>
        <strain>PB1/+</strain>
    </source>
</reference>
<accession>B2K3L2</accession>
<name>KHSE_YERPB</name>
<evidence type="ECO:0000255" key="1">
    <source>
        <dbReference type="HAMAP-Rule" id="MF_00384"/>
    </source>
</evidence>
<sequence>MVKIYAPASIGNVSVGFDVLGAAVSPIDGTLLGDCVSVTAAERFSLHNEGRFVSKLPDDPKQNIVYQCWERFCQEMGKEIPVAMVLEKNMPIGSGLGSSACSVVAGLMAMNEFCGQPLDKVTLLGMMGELEGRVSGSIHFDNVAPCYLGGMQLILEQEGYISQDVPGFSDWLWVMAYPGIKVSTAEARAILPAQYRRQDCITHGRNLAGFIHACHTQQPDLAAKMMKDVIAEPYRTQLLPGFAAARQAAQDIGALACGISGSGPTLFAVCNDQATAQRMAGWLQNHYLQNDEGFVHICRLDTAGARLLG</sequence>
<gene>
    <name evidence="1" type="primary">thrB</name>
    <name type="ordered locus">YPTS_0627</name>
</gene>
<organism>
    <name type="scientific">Yersinia pseudotuberculosis serotype IB (strain PB1/+)</name>
    <dbReference type="NCBI Taxonomy" id="502801"/>
    <lineage>
        <taxon>Bacteria</taxon>
        <taxon>Pseudomonadati</taxon>
        <taxon>Pseudomonadota</taxon>
        <taxon>Gammaproteobacteria</taxon>
        <taxon>Enterobacterales</taxon>
        <taxon>Yersiniaceae</taxon>
        <taxon>Yersinia</taxon>
    </lineage>
</organism>